<accession>B2U0A8</accession>
<comment type="similarity">
    <text evidence="1">Belongs to the UPF0597 family.</text>
</comment>
<gene>
    <name evidence="1" type="primary">yhaM</name>
    <name type="ordered locus">SbBS512_E3249</name>
</gene>
<keyword id="KW-1185">Reference proteome</keyword>
<organism>
    <name type="scientific">Shigella boydii serotype 18 (strain CDC 3083-94 / BS512)</name>
    <dbReference type="NCBI Taxonomy" id="344609"/>
    <lineage>
        <taxon>Bacteria</taxon>
        <taxon>Pseudomonadati</taxon>
        <taxon>Pseudomonadota</taxon>
        <taxon>Gammaproteobacteria</taxon>
        <taxon>Enterobacterales</taxon>
        <taxon>Enterobacteriaceae</taxon>
        <taxon>Shigella</taxon>
    </lineage>
</organism>
<protein>
    <recommendedName>
        <fullName evidence="1">UPF0597 protein YhaM</fullName>
    </recommendedName>
</protein>
<sequence length="436" mass="45379">MFDSTLNPLWQRYILAVQEEVKPALGCTEPISLALAAAVAAAELEGPVERVEAWVSPNLMKNGLGVTVPGTGMVGLPIAAALGALGGNANAGLEVLKDATAQAIADAKALLAAGKVSVKIQEPCNEILFSRAKVWNGEKWACVTIVGGHTNIVHIETHNSVVFTQQACVAEGEQESPLTVLSRTTLAEILKFVNEVPFAAIRFILDSAKLNCALSQEGLSGKWGLHIGATLEKQCERGLLAKDLSSSIVIRTSAASDARMGGATLPAMSNSGSGNQGITATMSVVVVAEHFGADDERLARALMLSHLSAIYIHNQLPRLSALCAATTAAMGAAAGMAWLVDGRYETISMAISSMIGDVSGMICDGASNSCAMKVSTSASAAWKAVLMALDDTAVTGNEGIVAHDVEQSIANLCALASHSMQQTDRQIIEIMASKAR</sequence>
<feature type="chain" id="PRO_1000188473" description="UPF0597 protein YhaM">
    <location>
        <begin position="1"/>
        <end position="436"/>
    </location>
</feature>
<proteinExistence type="inferred from homology"/>
<evidence type="ECO:0000255" key="1">
    <source>
        <dbReference type="HAMAP-Rule" id="MF_01845"/>
    </source>
</evidence>
<dbReference type="EMBL" id="CP001063">
    <property type="protein sequence ID" value="ACD07861.1"/>
    <property type="molecule type" value="Genomic_DNA"/>
</dbReference>
<dbReference type="SMR" id="B2U0A8"/>
<dbReference type="STRING" id="344609.SbBS512_E3249"/>
<dbReference type="KEGG" id="sbc:SbBS512_E3249"/>
<dbReference type="HOGENOM" id="CLU_051840_0_0_6"/>
<dbReference type="Proteomes" id="UP000001030">
    <property type="component" value="Chromosome"/>
</dbReference>
<dbReference type="GO" id="GO:0080146">
    <property type="term" value="F:L-cysteine desulfhydrase activity"/>
    <property type="evidence" value="ECO:0007669"/>
    <property type="project" value="TreeGrafter"/>
</dbReference>
<dbReference type="GO" id="GO:0019450">
    <property type="term" value="P:L-cysteine catabolic process to pyruvate"/>
    <property type="evidence" value="ECO:0007669"/>
    <property type="project" value="TreeGrafter"/>
</dbReference>
<dbReference type="HAMAP" id="MF_01845">
    <property type="entry name" value="UPF0597"/>
    <property type="match status" value="1"/>
</dbReference>
<dbReference type="InterPro" id="IPR005130">
    <property type="entry name" value="Ser_deHydtase-like_asu"/>
</dbReference>
<dbReference type="InterPro" id="IPR021144">
    <property type="entry name" value="UPF0597"/>
</dbReference>
<dbReference type="PANTHER" id="PTHR30501">
    <property type="entry name" value="UPF0597 PROTEIN YHAM"/>
    <property type="match status" value="1"/>
</dbReference>
<dbReference type="PANTHER" id="PTHR30501:SF2">
    <property type="entry name" value="UPF0597 PROTEIN YHAM"/>
    <property type="match status" value="1"/>
</dbReference>
<dbReference type="Pfam" id="PF03313">
    <property type="entry name" value="SDH_alpha"/>
    <property type="match status" value="1"/>
</dbReference>
<dbReference type="PIRSF" id="PIRSF006054">
    <property type="entry name" value="UCP006054"/>
    <property type="match status" value="1"/>
</dbReference>
<reference key="1">
    <citation type="submission" date="2008-05" db="EMBL/GenBank/DDBJ databases">
        <title>Complete sequence of Shigella boydii serotype 18 strain BS512.</title>
        <authorList>
            <person name="Rasko D.A."/>
            <person name="Rosovitz M."/>
            <person name="Maurelli A.T."/>
            <person name="Myers G."/>
            <person name="Seshadri R."/>
            <person name="Cer R."/>
            <person name="Jiang L."/>
            <person name="Ravel J."/>
            <person name="Sebastian Y."/>
        </authorList>
    </citation>
    <scope>NUCLEOTIDE SEQUENCE [LARGE SCALE GENOMIC DNA]</scope>
    <source>
        <strain>CDC 3083-94 / BS512</strain>
    </source>
</reference>
<name>YHAM_SHIB3</name>